<keyword id="KW-0002">3D-structure</keyword>
<keyword id="KW-1003">Cell membrane</keyword>
<keyword id="KW-1015">Disulfide bond</keyword>
<keyword id="KW-0325">Glycoprotein</keyword>
<keyword id="KW-0407">Ion channel</keyword>
<keyword id="KW-0406">Ion transport</keyword>
<keyword id="KW-1071">Ligand-gated ion channel</keyword>
<keyword id="KW-0472">Membrane</keyword>
<keyword id="KW-0597">Phosphoprotein</keyword>
<keyword id="KW-0628">Postsynaptic cell membrane</keyword>
<keyword id="KW-0675">Receptor</keyword>
<keyword id="KW-1185">Reference proteome</keyword>
<keyword id="KW-0732">Signal</keyword>
<keyword id="KW-0770">Synapse</keyword>
<keyword id="KW-0812">Transmembrane</keyword>
<keyword id="KW-1133">Transmembrane helix</keyword>
<keyword id="KW-0813">Transport</keyword>
<name>ACHB_BOVIN</name>
<protein>
    <recommendedName>
        <fullName>Acetylcholine receptor subunit beta</fullName>
    </recommendedName>
</protein>
<proteinExistence type="evidence at protein level"/>
<organism>
    <name type="scientific">Bos taurus</name>
    <name type="common">Bovine</name>
    <dbReference type="NCBI Taxonomy" id="9913"/>
    <lineage>
        <taxon>Eukaryota</taxon>
        <taxon>Metazoa</taxon>
        <taxon>Chordata</taxon>
        <taxon>Craniata</taxon>
        <taxon>Vertebrata</taxon>
        <taxon>Euteleostomi</taxon>
        <taxon>Mammalia</taxon>
        <taxon>Eutheria</taxon>
        <taxon>Laurasiatheria</taxon>
        <taxon>Artiodactyla</taxon>
        <taxon>Ruminantia</taxon>
        <taxon>Pecora</taxon>
        <taxon>Bovidae</taxon>
        <taxon>Bovinae</taxon>
        <taxon>Bos</taxon>
    </lineage>
</organism>
<feature type="signal peptide">
    <location>
        <begin position="1"/>
        <end position="24"/>
    </location>
</feature>
<feature type="chain" id="PRO_0000000314" description="Acetylcholine receptor subunit beta">
    <location>
        <begin position="25"/>
        <end position="505"/>
    </location>
</feature>
<feature type="topological domain" description="Extracellular" evidence="3">
    <location>
        <begin position="25"/>
        <end position="245"/>
    </location>
</feature>
<feature type="transmembrane region" description="Helical" evidence="3">
    <location>
        <begin position="246"/>
        <end position="270"/>
    </location>
</feature>
<feature type="transmembrane region" description="Helical" evidence="3">
    <location>
        <begin position="278"/>
        <end position="295"/>
    </location>
</feature>
<feature type="transmembrane region" description="Helical" evidence="3">
    <location>
        <begin position="312"/>
        <end position="333"/>
    </location>
</feature>
<feature type="topological domain" description="Cytoplasmic" evidence="3">
    <location>
        <begin position="334"/>
        <end position="473"/>
    </location>
</feature>
<feature type="transmembrane region" description="Helical" evidence="3">
    <location>
        <begin position="474"/>
        <end position="492"/>
    </location>
</feature>
<feature type="region of interest" description="Disordered" evidence="4">
    <location>
        <begin position="365"/>
        <end position="391"/>
    </location>
</feature>
<feature type="modified residue" description="Phosphotyrosine; by Tyr-kinases" evidence="1">
    <location>
        <position position="394"/>
    </location>
</feature>
<feature type="glycosylation site" description="N-linked (GlcNAc...) asparagine" evidence="3">
    <location>
        <position position="165"/>
    </location>
</feature>
<feature type="disulfide bond" evidence="1">
    <location>
        <begin position="152"/>
        <end position="166"/>
    </location>
</feature>
<feature type="helix" evidence="7">
    <location>
        <begin position="26"/>
        <end position="35"/>
    </location>
</feature>
<feature type="turn" evidence="8">
    <location>
        <begin position="36"/>
        <end position="38"/>
    </location>
</feature>
<feature type="strand" evidence="7">
    <location>
        <begin position="53"/>
        <end position="68"/>
    </location>
</feature>
<feature type="turn" evidence="7">
    <location>
        <begin position="69"/>
        <end position="72"/>
    </location>
</feature>
<feature type="strand" evidence="7">
    <location>
        <begin position="73"/>
        <end position="90"/>
    </location>
</feature>
<feature type="helix" evidence="7">
    <location>
        <begin position="93"/>
        <end position="95"/>
    </location>
</feature>
<feature type="turn" evidence="7">
    <location>
        <begin position="96"/>
        <end position="98"/>
    </location>
</feature>
<feature type="strand" evidence="7">
    <location>
        <begin position="101"/>
        <end position="105"/>
    </location>
</feature>
<feature type="helix" evidence="7">
    <location>
        <begin position="106"/>
        <end position="108"/>
    </location>
</feature>
<feature type="strand" evidence="7">
    <location>
        <begin position="114"/>
        <end position="116"/>
    </location>
</feature>
<feature type="strand" evidence="7">
    <location>
        <begin position="119"/>
        <end position="122"/>
    </location>
</feature>
<feature type="strand" evidence="7">
    <location>
        <begin position="131"/>
        <end position="135"/>
    </location>
</feature>
<feature type="strand" evidence="7">
    <location>
        <begin position="137"/>
        <end position="142"/>
    </location>
</feature>
<feature type="strand" evidence="7">
    <location>
        <begin position="145"/>
        <end position="151"/>
    </location>
</feature>
<feature type="turn" evidence="7">
    <location>
        <begin position="157"/>
        <end position="160"/>
    </location>
</feature>
<feature type="strand" evidence="7">
    <location>
        <begin position="163"/>
        <end position="174"/>
    </location>
</feature>
<feature type="turn" evidence="7">
    <location>
        <begin position="177"/>
        <end position="179"/>
    </location>
</feature>
<feature type="strand" evidence="7">
    <location>
        <begin position="180"/>
        <end position="184"/>
    </location>
</feature>
<feature type="strand" evidence="7">
    <location>
        <begin position="188"/>
        <end position="191"/>
    </location>
</feature>
<feature type="turn" evidence="7">
    <location>
        <begin position="200"/>
        <end position="202"/>
    </location>
</feature>
<feature type="strand" evidence="7">
    <location>
        <begin position="207"/>
        <end position="213"/>
    </location>
</feature>
<feature type="strand" evidence="7">
    <location>
        <begin position="215"/>
        <end position="219"/>
    </location>
</feature>
<feature type="strand" evidence="7">
    <location>
        <begin position="235"/>
        <end position="244"/>
    </location>
</feature>
<feature type="helix" evidence="7">
    <location>
        <begin position="247"/>
        <end position="252"/>
    </location>
</feature>
<feature type="helix" evidence="7">
    <location>
        <begin position="254"/>
        <end position="265"/>
    </location>
</feature>
<feature type="helix" evidence="7">
    <location>
        <begin position="266"/>
        <end position="269"/>
    </location>
</feature>
<feature type="helix" evidence="7">
    <location>
        <begin position="272"/>
        <end position="274"/>
    </location>
</feature>
<feature type="helix" evidence="7">
    <location>
        <begin position="277"/>
        <end position="295"/>
    </location>
</feature>
<feature type="turn" evidence="7">
    <location>
        <begin position="296"/>
        <end position="298"/>
    </location>
</feature>
<feature type="strand" evidence="7">
    <location>
        <begin position="303"/>
        <end position="305"/>
    </location>
</feature>
<feature type="helix" evidence="7">
    <location>
        <begin position="308"/>
        <end position="334"/>
    </location>
</feature>
<feature type="turn" evidence="7">
    <location>
        <begin position="338"/>
        <end position="340"/>
    </location>
</feature>
<feature type="helix" evidence="7">
    <location>
        <begin position="345"/>
        <end position="352"/>
    </location>
</feature>
<feature type="helix" evidence="7">
    <location>
        <begin position="355"/>
        <end position="359"/>
    </location>
</feature>
<feature type="helix" evidence="7">
    <location>
        <begin position="435"/>
        <end position="495"/>
    </location>
</feature>
<feature type="strand" evidence="7">
    <location>
        <begin position="501"/>
        <end position="503"/>
    </location>
</feature>
<evidence type="ECO:0000250" key="1"/>
<evidence type="ECO:0000250" key="2">
    <source>
        <dbReference type="UniProtKB" id="P11230"/>
    </source>
</evidence>
<evidence type="ECO:0000255" key="3"/>
<evidence type="ECO:0000256" key="4">
    <source>
        <dbReference type="SAM" id="MobiDB-lite"/>
    </source>
</evidence>
<evidence type="ECO:0000269" key="5">
    <source>
    </source>
</evidence>
<evidence type="ECO:0000305" key="6"/>
<evidence type="ECO:0007829" key="7">
    <source>
        <dbReference type="PDB" id="9AVV"/>
    </source>
</evidence>
<evidence type="ECO:0007829" key="8">
    <source>
        <dbReference type="PDB" id="9AWK"/>
    </source>
</evidence>
<reference key="1">
    <citation type="journal article" date="1984" name="Eur. J. Biochem.">
        <title>Primary structure of beta subunit precursor of calf muscle acetylcholine receptor deduced from cDNA sequence.</title>
        <authorList>
            <person name="Tanabe T."/>
            <person name="Noda M."/>
            <person name="Furutani Y."/>
            <person name="Takai T."/>
            <person name="Takahashi H."/>
            <person name="Tanaka K."/>
            <person name="Hirose T."/>
            <person name="Inayama S."/>
            <person name="Numa S."/>
        </authorList>
    </citation>
    <scope>NUCLEOTIDE SEQUENCE [MRNA]</scope>
</reference>
<reference key="2">
    <citation type="submission" date="2007-06" db="EMBL/GenBank/DDBJ databases">
        <authorList>
            <consortium name="NIH - Mammalian Gene Collection (MGC) project"/>
        </authorList>
    </citation>
    <scope>NUCLEOTIDE SEQUENCE [LARGE SCALE MRNA]</scope>
    <source>
        <strain>Hereford</strain>
        <tissue>Thymus</tissue>
    </source>
</reference>
<reference key="3">
    <citation type="journal article" date="1986" name="Nature">
        <title>Molecular distinction between fetal and adult forms of muscle acetylcholine receptor.</title>
        <authorList>
            <person name="Mishina M."/>
            <person name="Takai T."/>
            <person name="Imoto K."/>
            <person name="Noda M."/>
            <person name="Takahashi T."/>
            <person name="Numa S."/>
            <person name="Methfessel C."/>
            <person name="Sakmann B."/>
        </authorList>
    </citation>
    <scope>FUNCTION</scope>
    <scope>TRANSPORTER ACTIVITY</scope>
    <scope>SUBUNIT</scope>
</reference>
<accession>P04758</accession>
<accession>A6QL86</accession>
<dbReference type="EMBL" id="X00962">
    <property type="protein sequence ID" value="CAA25475.1"/>
    <property type="molecule type" value="mRNA"/>
</dbReference>
<dbReference type="EMBL" id="BC147876">
    <property type="protein sequence ID" value="AAI47877.1"/>
    <property type="molecule type" value="mRNA"/>
</dbReference>
<dbReference type="PIR" id="S07227">
    <property type="entry name" value="S07227"/>
</dbReference>
<dbReference type="RefSeq" id="NP_776941.1">
    <property type="nucleotide sequence ID" value="NM_174516.2"/>
</dbReference>
<dbReference type="RefSeq" id="XP_005220248.1">
    <property type="nucleotide sequence ID" value="XM_005220191.5"/>
</dbReference>
<dbReference type="PDB" id="9AVU">
    <property type="method" value="EM"/>
    <property type="resolution" value="2.45 A"/>
    <property type="chains" value="E=25-505"/>
</dbReference>
<dbReference type="PDB" id="9AVV">
    <property type="method" value="EM"/>
    <property type="resolution" value="2.09 A"/>
    <property type="chains" value="E=25-505"/>
</dbReference>
<dbReference type="PDB" id="9AWJ">
    <property type="method" value="EM"/>
    <property type="resolution" value="2.45 A"/>
    <property type="chains" value="E=25-505"/>
</dbReference>
<dbReference type="PDB" id="9AWK">
    <property type="method" value="EM"/>
    <property type="resolution" value="2.14 A"/>
    <property type="chains" value="E=25-505"/>
</dbReference>
<dbReference type="PDBsum" id="9AVU"/>
<dbReference type="PDBsum" id="9AVV"/>
<dbReference type="PDBsum" id="9AWJ"/>
<dbReference type="PDBsum" id="9AWK"/>
<dbReference type="EMDB" id="EMD-43923"/>
<dbReference type="EMDB" id="EMD-43924"/>
<dbReference type="EMDB" id="EMD-43925"/>
<dbReference type="EMDB" id="EMD-43926"/>
<dbReference type="SMR" id="P04758"/>
<dbReference type="CORUM" id="P04758"/>
<dbReference type="FunCoup" id="P04758">
    <property type="interactions" value="142"/>
</dbReference>
<dbReference type="STRING" id="9913.ENSBTAP00000025624"/>
<dbReference type="GlyCosmos" id="P04758">
    <property type="glycosylation" value="1 site, No reported glycans"/>
</dbReference>
<dbReference type="GlyGen" id="P04758">
    <property type="glycosylation" value="1 site"/>
</dbReference>
<dbReference type="PaxDb" id="9913-ENSBTAP00000025624"/>
<dbReference type="Ensembl" id="ENSBTAT00000025624.5">
    <property type="protein sequence ID" value="ENSBTAP00000025624.4"/>
    <property type="gene ID" value="ENSBTAG00000019242.6"/>
</dbReference>
<dbReference type="GeneID" id="282179"/>
<dbReference type="KEGG" id="bta:282179"/>
<dbReference type="CTD" id="1140"/>
<dbReference type="VEuPathDB" id="HostDB:ENSBTAG00000019242"/>
<dbReference type="VGNC" id="VGNC:27330">
    <property type="gene designation" value="CHRNB1"/>
</dbReference>
<dbReference type="eggNOG" id="KOG3645">
    <property type="taxonomic scope" value="Eukaryota"/>
</dbReference>
<dbReference type="GeneTree" id="ENSGT00940000158661"/>
<dbReference type="HOGENOM" id="CLU_018074_1_4_1"/>
<dbReference type="InParanoid" id="P04758"/>
<dbReference type="OMA" id="PCILITV"/>
<dbReference type="OrthoDB" id="5975154at2759"/>
<dbReference type="TreeFam" id="TF315605"/>
<dbReference type="Proteomes" id="UP000009136">
    <property type="component" value="Chromosome 19"/>
</dbReference>
<dbReference type="Bgee" id="ENSBTAG00000019242">
    <property type="expression patterns" value="Expressed in biceps femoris and 104 other cell types or tissues"/>
</dbReference>
<dbReference type="GO" id="GO:0005892">
    <property type="term" value="C:acetylcholine-gated channel complex"/>
    <property type="evidence" value="ECO:0000250"/>
    <property type="project" value="UniProtKB"/>
</dbReference>
<dbReference type="GO" id="GO:0043005">
    <property type="term" value="C:neuron projection"/>
    <property type="evidence" value="ECO:0000318"/>
    <property type="project" value="GO_Central"/>
</dbReference>
<dbReference type="GO" id="GO:0005886">
    <property type="term" value="C:plasma membrane"/>
    <property type="evidence" value="ECO:0000318"/>
    <property type="project" value="GO_Central"/>
</dbReference>
<dbReference type="GO" id="GO:0045211">
    <property type="term" value="C:postsynaptic membrane"/>
    <property type="evidence" value="ECO:0007669"/>
    <property type="project" value="UniProtKB-SubCell"/>
</dbReference>
<dbReference type="GO" id="GO:0045202">
    <property type="term" value="C:synapse"/>
    <property type="evidence" value="ECO:0000250"/>
    <property type="project" value="UniProtKB"/>
</dbReference>
<dbReference type="GO" id="GO:0015464">
    <property type="term" value="F:acetylcholine receptor activity"/>
    <property type="evidence" value="ECO:0000318"/>
    <property type="project" value="GO_Central"/>
</dbReference>
<dbReference type="GO" id="GO:0022848">
    <property type="term" value="F:acetylcholine-gated monoatomic cation-selective channel activity"/>
    <property type="evidence" value="ECO:0007669"/>
    <property type="project" value="InterPro"/>
</dbReference>
<dbReference type="GO" id="GO:0015267">
    <property type="term" value="F:channel activity"/>
    <property type="evidence" value="ECO:0000250"/>
    <property type="project" value="UniProtKB"/>
</dbReference>
<dbReference type="GO" id="GO:0005231">
    <property type="term" value="F:excitatory extracellular ligand-gated monoatomic ion channel activity"/>
    <property type="evidence" value="ECO:0000318"/>
    <property type="project" value="GO_Central"/>
</dbReference>
<dbReference type="GO" id="GO:1904315">
    <property type="term" value="F:transmitter-gated monoatomic ion channel activity involved in regulation of postsynaptic membrane potential"/>
    <property type="evidence" value="ECO:0000318"/>
    <property type="project" value="GO_Central"/>
</dbReference>
<dbReference type="GO" id="GO:0095500">
    <property type="term" value="P:acetylcholine receptor signaling pathway"/>
    <property type="evidence" value="ECO:0000318"/>
    <property type="project" value="GO_Central"/>
</dbReference>
<dbReference type="GO" id="GO:0035095">
    <property type="term" value="P:behavioral response to nicotine"/>
    <property type="evidence" value="ECO:0000250"/>
    <property type="project" value="UniProtKB"/>
</dbReference>
<dbReference type="GO" id="GO:0007268">
    <property type="term" value="P:chemical synaptic transmission"/>
    <property type="evidence" value="ECO:0000318"/>
    <property type="project" value="GO_Central"/>
</dbReference>
<dbReference type="GO" id="GO:0051899">
    <property type="term" value="P:membrane depolarization"/>
    <property type="evidence" value="ECO:0000318"/>
    <property type="project" value="GO_Central"/>
</dbReference>
<dbReference type="GO" id="GO:0006812">
    <property type="term" value="P:monoatomic cation transport"/>
    <property type="evidence" value="ECO:0000250"/>
    <property type="project" value="UniProtKB"/>
</dbReference>
<dbReference type="GO" id="GO:0034220">
    <property type="term" value="P:monoatomic ion transmembrane transport"/>
    <property type="evidence" value="ECO:0000318"/>
    <property type="project" value="GO_Central"/>
</dbReference>
<dbReference type="GO" id="GO:0055001">
    <property type="term" value="P:muscle cell development"/>
    <property type="evidence" value="ECO:0000250"/>
    <property type="project" value="UniProtKB"/>
</dbReference>
<dbReference type="GO" id="GO:0006936">
    <property type="term" value="P:muscle contraction"/>
    <property type="evidence" value="ECO:0000250"/>
    <property type="project" value="UniProtKB"/>
</dbReference>
<dbReference type="GO" id="GO:0050877">
    <property type="term" value="P:nervous system process"/>
    <property type="evidence" value="ECO:0000250"/>
    <property type="project" value="UniProtKB"/>
</dbReference>
<dbReference type="GO" id="GO:0007274">
    <property type="term" value="P:neuromuscular synaptic transmission"/>
    <property type="evidence" value="ECO:0000250"/>
    <property type="project" value="UniProtKB"/>
</dbReference>
<dbReference type="GO" id="GO:0001941">
    <property type="term" value="P:postsynaptic membrane organization"/>
    <property type="evidence" value="ECO:0000250"/>
    <property type="project" value="UniProtKB"/>
</dbReference>
<dbReference type="GO" id="GO:0007165">
    <property type="term" value="P:signal transduction"/>
    <property type="evidence" value="ECO:0000250"/>
    <property type="project" value="UniProtKB"/>
</dbReference>
<dbReference type="GO" id="GO:0007271">
    <property type="term" value="P:synaptic transmission, cholinergic"/>
    <property type="evidence" value="ECO:0000250"/>
    <property type="project" value="UniProtKB"/>
</dbReference>
<dbReference type="CDD" id="cd19024">
    <property type="entry name" value="LGIC_ECD_nAChR_B1"/>
    <property type="match status" value="1"/>
</dbReference>
<dbReference type="CDD" id="cd19064">
    <property type="entry name" value="LGIC_TM_nAChR"/>
    <property type="match status" value="1"/>
</dbReference>
<dbReference type="FunFam" id="1.20.58.390:FF:000026">
    <property type="entry name" value="Cholinergic receptor nicotinic beta 1 subunit"/>
    <property type="match status" value="1"/>
</dbReference>
<dbReference type="FunFam" id="2.70.170.10:FF:000012">
    <property type="entry name" value="Nicotinic acetylcholine receptor subunit gamma"/>
    <property type="match status" value="1"/>
</dbReference>
<dbReference type="Gene3D" id="2.70.170.10">
    <property type="entry name" value="Neurotransmitter-gated ion-channel ligand-binding domain"/>
    <property type="match status" value="1"/>
</dbReference>
<dbReference type="Gene3D" id="1.20.58.390">
    <property type="entry name" value="Neurotransmitter-gated ion-channel transmembrane domain"/>
    <property type="match status" value="2"/>
</dbReference>
<dbReference type="InterPro" id="IPR006202">
    <property type="entry name" value="Neur_chan_lig-bd"/>
</dbReference>
<dbReference type="InterPro" id="IPR036734">
    <property type="entry name" value="Neur_chan_lig-bd_sf"/>
</dbReference>
<dbReference type="InterPro" id="IPR006201">
    <property type="entry name" value="Neur_channel"/>
</dbReference>
<dbReference type="InterPro" id="IPR036719">
    <property type="entry name" value="Neuro-gated_channel_TM_sf"/>
</dbReference>
<dbReference type="InterPro" id="IPR038050">
    <property type="entry name" value="Neuro_actylchol_rec"/>
</dbReference>
<dbReference type="InterPro" id="IPR006029">
    <property type="entry name" value="Neurotrans-gated_channel_TM"/>
</dbReference>
<dbReference type="InterPro" id="IPR018000">
    <property type="entry name" value="Neurotransmitter_ion_chnl_CS"/>
</dbReference>
<dbReference type="InterPro" id="IPR002394">
    <property type="entry name" value="Nicotinic_acetylcholine_rcpt"/>
</dbReference>
<dbReference type="NCBIfam" id="TIGR00860">
    <property type="entry name" value="LIC"/>
    <property type="match status" value="1"/>
</dbReference>
<dbReference type="PANTHER" id="PTHR18945">
    <property type="entry name" value="NEUROTRANSMITTER GATED ION CHANNEL"/>
    <property type="match status" value="1"/>
</dbReference>
<dbReference type="Pfam" id="PF02931">
    <property type="entry name" value="Neur_chan_LBD"/>
    <property type="match status" value="1"/>
</dbReference>
<dbReference type="Pfam" id="PF02932">
    <property type="entry name" value="Neur_chan_memb"/>
    <property type="match status" value="1"/>
</dbReference>
<dbReference type="PRINTS" id="PR00254">
    <property type="entry name" value="NICOTINICR"/>
</dbReference>
<dbReference type="PRINTS" id="PR00252">
    <property type="entry name" value="NRIONCHANNEL"/>
</dbReference>
<dbReference type="SUPFAM" id="SSF90112">
    <property type="entry name" value="Neurotransmitter-gated ion-channel transmembrane pore"/>
    <property type="match status" value="1"/>
</dbReference>
<dbReference type="SUPFAM" id="SSF63712">
    <property type="entry name" value="Nicotinic receptor ligand binding domain-like"/>
    <property type="match status" value="1"/>
</dbReference>
<dbReference type="PROSITE" id="PS00236">
    <property type="entry name" value="NEUROTR_ION_CHANNEL"/>
    <property type="match status" value="1"/>
</dbReference>
<gene>
    <name type="primary">CHRNB1</name>
</gene>
<comment type="function">
    <text evidence="5">After binding acetylcholine, the AChR responds by an extensive change in conformation that affects all subunits and leads to opening of an ion-conducting channel across the plasma membrane.</text>
</comment>
<comment type="catalytic activity">
    <reaction evidence="5">
        <text>K(+)(in) = K(+)(out)</text>
        <dbReference type="Rhea" id="RHEA:29463"/>
        <dbReference type="ChEBI" id="CHEBI:29103"/>
    </reaction>
</comment>
<comment type="catalytic activity">
    <reaction evidence="5">
        <text>Na(+)(in) = Na(+)(out)</text>
        <dbReference type="Rhea" id="RHEA:34963"/>
        <dbReference type="ChEBI" id="CHEBI:29101"/>
    </reaction>
</comment>
<comment type="subunit">
    <text evidence="2 5">Pentamer of two alpha chains, and one each of the beta, delta, and gamma (in immature muscle) or epsilon (in mature muscle) chains (PubMed:2423878). The muscle heteropentamer composed of alpha-1, beta-1, delta, epsilon subunits interacts with the alpha-conotoxin ImII.</text>
</comment>
<comment type="subcellular location">
    <subcellularLocation>
        <location>Postsynaptic cell membrane</location>
        <topology>Multi-pass membrane protein</topology>
    </subcellularLocation>
    <subcellularLocation>
        <location>Cell membrane</location>
        <topology>Multi-pass membrane protein</topology>
    </subcellularLocation>
</comment>
<comment type="similarity">
    <text evidence="6">Belongs to the ligand-gated ion channel (TC 1.A.9) family. Acetylcholine receptor (TC 1.A.9.1) subfamily. Beta-1/CHRNB1 sub-subfamily.</text>
</comment>
<sequence length="505" mass="57352">MTPGALLLLLLGVLGAHLAPGARGSEAEGRLREKLFSGYDSTVRPAREVGDRVWVSIGLTLAQLISLNEKDEEMSTKVYLDLEWTDYRLSWDPEEHEGIDSLRISAESVWLPDVVLLNNNDGNFDVALDINVVVSSDGSMRWQPPGIYRSSCSIQVTYFPFDWQNCTMVFSSYSYDSSEVSLQTGLSPEGQERQEVYIHEGTFIENGQWEIIHKPSRLIQPSVDPRGGGEGRREEVTFYLIIRRKPLFYLVNVIAPCILITLLAIFVFYLPPDAGEKMGLSIFALLTLTVFLLLLADKVPETSLSVPIIIKYLMFTMVLVTFSVILSVVVLNLHHRSPHTHQMPLWVRQIFIHKLPLYLGLKRPKPERDQMQEPPSIAPRDSPGSGWGRGTDEYFIRKPPNDFLFPKPNRFQPELSAPDLRRFIDGPNRAVGLPPELREVVSSISYIARQLQEQEDHDVLKEDWQFVAMVVDRLFLWTFIIFTSVGTLVIFLDATYHLPPADPFP</sequence>